<gene>
    <name type="primary">rpsS</name>
    <name type="ordered locus">MPN_169</name>
    <name type="ORF">MP662</name>
</gene>
<sequence>MSRSAKKGAFVDAHLLKKVIDMNKQEKKRPIKTWSRRSTIFPEFVGNTFAVHNGKTFINVYVTDDMVGHKLGEFSPTRNFKQHTANR</sequence>
<comment type="function">
    <text evidence="1">Protein S19 forms a complex with S13 that binds strongly to the 16S ribosomal RNA.</text>
</comment>
<comment type="similarity">
    <text evidence="2">Belongs to the universal ribosomal protein uS19 family.</text>
</comment>
<reference key="1">
    <citation type="journal article" date="1996" name="Nucleic Acids Res.">
        <title>Complete sequence analysis of the genome of the bacterium Mycoplasma pneumoniae.</title>
        <authorList>
            <person name="Himmelreich R."/>
            <person name="Hilbert H."/>
            <person name="Plagens H."/>
            <person name="Pirkl E."/>
            <person name="Li B.-C."/>
            <person name="Herrmann R."/>
        </authorList>
    </citation>
    <scope>NUCLEOTIDE SEQUENCE [LARGE SCALE GENOMIC DNA]</scope>
    <source>
        <strain>ATCC 29342 / M129 / Subtype 1</strain>
    </source>
</reference>
<evidence type="ECO:0000250" key="1"/>
<evidence type="ECO:0000305" key="2"/>
<evidence type="ECO:0007829" key="3">
    <source>
        <dbReference type="PDB" id="8P6P"/>
    </source>
</evidence>
<organism>
    <name type="scientific">Mycoplasma pneumoniae (strain ATCC 29342 / M129 / Subtype 1)</name>
    <name type="common">Mycoplasmoides pneumoniae</name>
    <dbReference type="NCBI Taxonomy" id="272634"/>
    <lineage>
        <taxon>Bacteria</taxon>
        <taxon>Bacillati</taxon>
        <taxon>Mycoplasmatota</taxon>
        <taxon>Mycoplasmoidales</taxon>
        <taxon>Mycoplasmoidaceae</taxon>
        <taxon>Mycoplasmoides</taxon>
    </lineage>
</organism>
<proteinExistence type="evidence at protein level"/>
<protein>
    <recommendedName>
        <fullName evidence="2">Small ribosomal subunit protein uS19</fullName>
    </recommendedName>
    <alternativeName>
        <fullName>30S ribosomal protein S19</fullName>
    </alternativeName>
</protein>
<keyword id="KW-0002">3D-structure</keyword>
<keyword id="KW-1185">Reference proteome</keyword>
<keyword id="KW-0687">Ribonucleoprotein</keyword>
<keyword id="KW-0689">Ribosomal protein</keyword>
<keyword id="KW-0694">RNA-binding</keyword>
<keyword id="KW-0699">rRNA-binding</keyword>
<name>RS19_MYCPN</name>
<accession>P75576</accession>
<dbReference type="EMBL" id="U00089">
    <property type="protein sequence ID" value="AAB96310.1"/>
    <property type="molecule type" value="Genomic_DNA"/>
</dbReference>
<dbReference type="PIR" id="S73988">
    <property type="entry name" value="S73988"/>
</dbReference>
<dbReference type="RefSeq" id="NP_109857.1">
    <property type="nucleotide sequence ID" value="NC_000912.1"/>
</dbReference>
<dbReference type="RefSeq" id="WP_010874526.1">
    <property type="nucleotide sequence ID" value="NZ_OU342337.1"/>
</dbReference>
<dbReference type="PDB" id="7OOC">
    <property type="method" value="EM"/>
    <property type="resolution" value="3.70 A"/>
    <property type="chains" value="R=1-87"/>
</dbReference>
<dbReference type="PDB" id="7P6Z">
    <property type="method" value="EM"/>
    <property type="resolution" value="3.50 A"/>
    <property type="chains" value="R=1-87"/>
</dbReference>
<dbReference type="PDB" id="7PAH">
    <property type="method" value="EM"/>
    <property type="resolution" value="9.50 A"/>
    <property type="chains" value="R=1-87"/>
</dbReference>
<dbReference type="PDB" id="7PAI">
    <property type="method" value="EM"/>
    <property type="resolution" value="6.70 A"/>
    <property type="chains" value="R=1-87"/>
</dbReference>
<dbReference type="PDB" id="7PAJ">
    <property type="method" value="EM"/>
    <property type="resolution" value="7.30 A"/>
    <property type="chains" value="R=1-87"/>
</dbReference>
<dbReference type="PDB" id="7PAK">
    <property type="method" value="EM"/>
    <property type="resolution" value="5.30 A"/>
    <property type="chains" value="R=1-87"/>
</dbReference>
<dbReference type="PDB" id="7PAL">
    <property type="method" value="EM"/>
    <property type="resolution" value="4.70 A"/>
    <property type="chains" value="R=1-87"/>
</dbReference>
<dbReference type="PDB" id="7PAM">
    <property type="method" value="EM"/>
    <property type="resolution" value="6.80 A"/>
    <property type="chains" value="R=1-87"/>
</dbReference>
<dbReference type="PDB" id="7PAN">
    <property type="method" value="EM"/>
    <property type="resolution" value="9.70 A"/>
    <property type="chains" value="R=1-87"/>
</dbReference>
<dbReference type="PDB" id="7PAO">
    <property type="method" value="EM"/>
    <property type="resolution" value="7.00 A"/>
    <property type="chains" value="R=1-87"/>
</dbReference>
<dbReference type="PDB" id="7PAQ">
    <property type="method" value="EM"/>
    <property type="resolution" value="8.90 A"/>
    <property type="chains" value="R=1-87"/>
</dbReference>
<dbReference type="PDB" id="7PAR">
    <property type="method" value="EM"/>
    <property type="resolution" value="8.20 A"/>
    <property type="chains" value="R=1-87"/>
</dbReference>
<dbReference type="PDB" id="7PAS">
    <property type="method" value="EM"/>
    <property type="resolution" value="16.00 A"/>
    <property type="chains" value="R=1-87"/>
</dbReference>
<dbReference type="PDB" id="7PH9">
    <property type="method" value="EM"/>
    <property type="resolution" value="8.70 A"/>
    <property type="chains" value="R=1-87"/>
</dbReference>
<dbReference type="PDB" id="7PHA">
    <property type="method" value="EM"/>
    <property type="resolution" value="8.50 A"/>
    <property type="chains" value="R=1-87"/>
</dbReference>
<dbReference type="PDB" id="7PHB">
    <property type="method" value="EM"/>
    <property type="resolution" value="4.90 A"/>
    <property type="chains" value="R=1-87"/>
</dbReference>
<dbReference type="PDB" id="7PHC">
    <property type="method" value="EM"/>
    <property type="resolution" value="9.90 A"/>
    <property type="chains" value="R=1-87"/>
</dbReference>
<dbReference type="PDB" id="7PI8">
    <property type="method" value="EM"/>
    <property type="resolution" value="8.90 A"/>
    <property type="chains" value="R=1-87"/>
</dbReference>
<dbReference type="PDB" id="7PI9">
    <property type="method" value="EM"/>
    <property type="resolution" value="6.30 A"/>
    <property type="chains" value="R=1-87"/>
</dbReference>
<dbReference type="PDB" id="7PIA">
    <property type="method" value="EM"/>
    <property type="resolution" value="13.60 A"/>
    <property type="chains" value="R=1-87"/>
</dbReference>
<dbReference type="PDB" id="7PIB">
    <property type="method" value="EM"/>
    <property type="resolution" value="4.70 A"/>
    <property type="chains" value="R=1-87"/>
</dbReference>
<dbReference type="PDB" id="7PIC">
    <property type="method" value="EM"/>
    <property type="resolution" value="9.10 A"/>
    <property type="chains" value="R=1-87"/>
</dbReference>
<dbReference type="PDB" id="7PIO">
    <property type="method" value="EM"/>
    <property type="resolution" value="9.50 A"/>
    <property type="chains" value="R=1-87"/>
</dbReference>
<dbReference type="PDB" id="7PIP">
    <property type="method" value="EM"/>
    <property type="resolution" value="9.30 A"/>
    <property type="chains" value="R=1-87"/>
</dbReference>
<dbReference type="PDB" id="7PIQ">
    <property type="method" value="EM"/>
    <property type="resolution" value="9.70 A"/>
    <property type="chains" value="R=1-87"/>
</dbReference>
<dbReference type="PDB" id="7PIR">
    <property type="method" value="EM"/>
    <property type="resolution" value="12.10 A"/>
    <property type="chains" value="R=1-87"/>
</dbReference>
<dbReference type="PDB" id="7PIS">
    <property type="method" value="EM"/>
    <property type="resolution" value="15.00 A"/>
    <property type="chains" value="R=1-87"/>
</dbReference>
<dbReference type="PDB" id="7PIT">
    <property type="method" value="EM"/>
    <property type="resolution" value="5.70 A"/>
    <property type="chains" value="R=1-87"/>
</dbReference>
<dbReference type="PDB" id="8P6P">
    <property type="method" value="EM"/>
    <property type="resolution" value="3.20 A"/>
    <property type="chains" value="R=1-87"/>
</dbReference>
<dbReference type="PDB" id="8P7X">
    <property type="method" value="EM"/>
    <property type="resolution" value="3.03 A"/>
    <property type="chains" value="R=1-87"/>
</dbReference>
<dbReference type="PDB" id="8P7Y">
    <property type="method" value="EM"/>
    <property type="resolution" value="3.70 A"/>
    <property type="chains" value="R=1-87"/>
</dbReference>
<dbReference type="PDB" id="8P8V">
    <property type="method" value="EM"/>
    <property type="resolution" value="8.70 A"/>
    <property type="chains" value="R=1-87"/>
</dbReference>
<dbReference type="PDB" id="8P8W">
    <property type="method" value="EM"/>
    <property type="resolution" value="8.70 A"/>
    <property type="chains" value="R=1-87"/>
</dbReference>
<dbReference type="PDBsum" id="7OOC"/>
<dbReference type="PDBsum" id="7P6Z"/>
<dbReference type="PDBsum" id="7PAH"/>
<dbReference type="PDBsum" id="7PAI"/>
<dbReference type="PDBsum" id="7PAJ"/>
<dbReference type="PDBsum" id="7PAK"/>
<dbReference type="PDBsum" id="7PAL"/>
<dbReference type="PDBsum" id="7PAM"/>
<dbReference type="PDBsum" id="7PAN"/>
<dbReference type="PDBsum" id="7PAO"/>
<dbReference type="PDBsum" id="7PAQ"/>
<dbReference type="PDBsum" id="7PAR"/>
<dbReference type="PDBsum" id="7PAS"/>
<dbReference type="PDBsum" id="7PH9"/>
<dbReference type="PDBsum" id="7PHA"/>
<dbReference type="PDBsum" id="7PHB"/>
<dbReference type="PDBsum" id="7PHC"/>
<dbReference type="PDBsum" id="7PI8"/>
<dbReference type="PDBsum" id="7PI9"/>
<dbReference type="PDBsum" id="7PIA"/>
<dbReference type="PDBsum" id="7PIB"/>
<dbReference type="PDBsum" id="7PIC"/>
<dbReference type="PDBsum" id="7PIO"/>
<dbReference type="PDBsum" id="7PIP"/>
<dbReference type="PDBsum" id="7PIQ"/>
<dbReference type="PDBsum" id="7PIR"/>
<dbReference type="PDBsum" id="7PIS"/>
<dbReference type="PDBsum" id="7PIT"/>
<dbReference type="PDBsum" id="8P6P"/>
<dbReference type="PDBsum" id="8P7X"/>
<dbReference type="PDBsum" id="8P7Y"/>
<dbReference type="PDBsum" id="8P8V"/>
<dbReference type="PDBsum" id="8P8W"/>
<dbReference type="EMDB" id="EMD-13234"/>
<dbReference type="EMDB" id="EMD-13272"/>
<dbReference type="EMDB" id="EMD-13273"/>
<dbReference type="EMDB" id="EMD-13274"/>
<dbReference type="EMDB" id="EMD-13275"/>
<dbReference type="EMDB" id="EMD-13276"/>
<dbReference type="EMDB" id="EMD-13277"/>
<dbReference type="EMDB" id="EMD-13278"/>
<dbReference type="EMDB" id="EMD-13279"/>
<dbReference type="EMDB" id="EMD-13280"/>
<dbReference type="EMDB" id="EMD-13281"/>
<dbReference type="EMDB" id="EMD-13282"/>
<dbReference type="EMDB" id="EMD-13410"/>
<dbReference type="EMDB" id="EMD-13411"/>
<dbReference type="EMDB" id="EMD-13412"/>
<dbReference type="EMDB" id="EMD-13413"/>
<dbReference type="EMDB" id="EMD-13432"/>
<dbReference type="EMDB" id="EMD-13433"/>
<dbReference type="EMDB" id="EMD-13434"/>
<dbReference type="EMDB" id="EMD-13435"/>
<dbReference type="EMDB" id="EMD-13436"/>
<dbReference type="EMDB" id="EMD-13445"/>
<dbReference type="EMDB" id="EMD-13446"/>
<dbReference type="EMDB" id="EMD-13447"/>
<dbReference type="EMDB" id="EMD-13448"/>
<dbReference type="EMDB" id="EMD-13449"/>
<dbReference type="EMDB" id="EMD-13450"/>
<dbReference type="SMR" id="P75576"/>
<dbReference type="IntAct" id="P75576">
    <property type="interactions" value="10"/>
</dbReference>
<dbReference type="STRING" id="272634.MPN_169"/>
<dbReference type="EnsemblBacteria" id="AAB96310">
    <property type="protein sequence ID" value="AAB96310"/>
    <property type="gene ID" value="MPN_169"/>
</dbReference>
<dbReference type="GeneID" id="66609183"/>
<dbReference type="KEGG" id="mpn:MPN_169"/>
<dbReference type="PATRIC" id="fig|272634.6.peg.187"/>
<dbReference type="HOGENOM" id="CLU_144911_0_1_14"/>
<dbReference type="OrthoDB" id="9797833at2"/>
<dbReference type="BioCyc" id="MPNE272634:G1GJ3-279-MONOMER"/>
<dbReference type="Proteomes" id="UP000000808">
    <property type="component" value="Chromosome"/>
</dbReference>
<dbReference type="GO" id="GO:0005737">
    <property type="term" value="C:cytoplasm"/>
    <property type="evidence" value="ECO:0007669"/>
    <property type="project" value="UniProtKB-ARBA"/>
</dbReference>
<dbReference type="GO" id="GO:0015935">
    <property type="term" value="C:small ribosomal subunit"/>
    <property type="evidence" value="ECO:0007669"/>
    <property type="project" value="InterPro"/>
</dbReference>
<dbReference type="GO" id="GO:0019843">
    <property type="term" value="F:rRNA binding"/>
    <property type="evidence" value="ECO:0007669"/>
    <property type="project" value="UniProtKB-UniRule"/>
</dbReference>
<dbReference type="GO" id="GO:0003735">
    <property type="term" value="F:structural constituent of ribosome"/>
    <property type="evidence" value="ECO:0007669"/>
    <property type="project" value="InterPro"/>
</dbReference>
<dbReference type="GO" id="GO:0000028">
    <property type="term" value="P:ribosomal small subunit assembly"/>
    <property type="evidence" value="ECO:0007669"/>
    <property type="project" value="TreeGrafter"/>
</dbReference>
<dbReference type="GO" id="GO:0006412">
    <property type="term" value="P:translation"/>
    <property type="evidence" value="ECO:0007669"/>
    <property type="project" value="UniProtKB-UniRule"/>
</dbReference>
<dbReference type="FunFam" id="3.30.860.10:FF:000001">
    <property type="entry name" value="30S ribosomal protein S19"/>
    <property type="match status" value="1"/>
</dbReference>
<dbReference type="Gene3D" id="3.30.860.10">
    <property type="entry name" value="30s Ribosomal Protein S19, Chain A"/>
    <property type="match status" value="1"/>
</dbReference>
<dbReference type="HAMAP" id="MF_00531">
    <property type="entry name" value="Ribosomal_uS19"/>
    <property type="match status" value="1"/>
</dbReference>
<dbReference type="InterPro" id="IPR002222">
    <property type="entry name" value="Ribosomal_uS19"/>
</dbReference>
<dbReference type="InterPro" id="IPR005732">
    <property type="entry name" value="Ribosomal_uS19_bac-type"/>
</dbReference>
<dbReference type="InterPro" id="IPR020934">
    <property type="entry name" value="Ribosomal_uS19_CS"/>
</dbReference>
<dbReference type="InterPro" id="IPR023575">
    <property type="entry name" value="Ribosomal_uS19_SF"/>
</dbReference>
<dbReference type="NCBIfam" id="TIGR01050">
    <property type="entry name" value="rpsS_bact"/>
    <property type="match status" value="1"/>
</dbReference>
<dbReference type="PANTHER" id="PTHR11880">
    <property type="entry name" value="RIBOSOMAL PROTEIN S19P FAMILY MEMBER"/>
    <property type="match status" value="1"/>
</dbReference>
<dbReference type="PANTHER" id="PTHR11880:SF8">
    <property type="entry name" value="SMALL RIBOSOMAL SUBUNIT PROTEIN US19M"/>
    <property type="match status" value="1"/>
</dbReference>
<dbReference type="Pfam" id="PF00203">
    <property type="entry name" value="Ribosomal_S19"/>
    <property type="match status" value="1"/>
</dbReference>
<dbReference type="PIRSF" id="PIRSF002144">
    <property type="entry name" value="Ribosomal_S19"/>
    <property type="match status" value="1"/>
</dbReference>
<dbReference type="PRINTS" id="PR00975">
    <property type="entry name" value="RIBOSOMALS19"/>
</dbReference>
<dbReference type="SUPFAM" id="SSF54570">
    <property type="entry name" value="Ribosomal protein S19"/>
    <property type="match status" value="1"/>
</dbReference>
<dbReference type="PROSITE" id="PS00323">
    <property type="entry name" value="RIBOSOMAL_S19"/>
    <property type="match status" value="1"/>
</dbReference>
<feature type="chain" id="PRO_0000129862" description="Small ribosomal subunit protein uS19">
    <location>
        <begin position="1"/>
        <end position="87"/>
    </location>
</feature>
<feature type="turn" evidence="3">
    <location>
        <begin position="5"/>
        <end position="7"/>
    </location>
</feature>
<feature type="helix" evidence="3">
    <location>
        <begin position="14"/>
        <end position="24"/>
    </location>
</feature>
<feature type="strand" evidence="3">
    <location>
        <begin position="25"/>
        <end position="27"/>
    </location>
</feature>
<feature type="strand" evidence="3">
    <location>
        <begin position="31"/>
        <end position="33"/>
    </location>
</feature>
<feature type="helix" evidence="3">
    <location>
        <begin position="42"/>
        <end position="44"/>
    </location>
</feature>
<feature type="strand" evidence="3">
    <location>
        <begin position="48"/>
        <end position="52"/>
    </location>
</feature>
<feature type="strand" evidence="3">
    <location>
        <begin position="54"/>
        <end position="61"/>
    </location>
</feature>
<feature type="strand" evidence="3">
    <location>
        <begin position="64"/>
        <end position="66"/>
    </location>
</feature>
<feature type="helix" evidence="3">
    <location>
        <begin position="71"/>
        <end position="74"/>
    </location>
</feature>